<accession>P48363</accession>
<accession>D6VUL0</accession>
<organism>
    <name type="scientific">Saccharomyces cerevisiae (strain ATCC 204508 / S288c)</name>
    <name type="common">Baker's yeast</name>
    <dbReference type="NCBI Taxonomy" id="559292"/>
    <lineage>
        <taxon>Eukaryota</taxon>
        <taxon>Fungi</taxon>
        <taxon>Dikarya</taxon>
        <taxon>Ascomycota</taxon>
        <taxon>Saccharomycotina</taxon>
        <taxon>Saccharomycetes</taxon>
        <taxon>Saccharomycetales</taxon>
        <taxon>Saccharomycetaceae</taxon>
        <taxon>Saccharomyces</taxon>
    </lineage>
</organism>
<dbReference type="EMBL" id="U29137">
    <property type="protein sequence ID" value="AAA70038.1"/>
    <property type="molecule type" value="Genomic_DNA"/>
</dbReference>
<dbReference type="EMBL" id="Z72863">
    <property type="protein sequence ID" value="CAA97080.1"/>
    <property type="molecule type" value="Genomic_DNA"/>
</dbReference>
<dbReference type="EMBL" id="AY557774">
    <property type="protein sequence ID" value="AAS56100.1"/>
    <property type="molecule type" value="Genomic_DNA"/>
</dbReference>
<dbReference type="EMBL" id="BK006941">
    <property type="protein sequence ID" value="DAA08171.1"/>
    <property type="molecule type" value="Genomic_DNA"/>
</dbReference>
<dbReference type="PIR" id="S59741">
    <property type="entry name" value="S59741"/>
</dbReference>
<dbReference type="RefSeq" id="NP_011592.3">
    <property type="nucleotide sequence ID" value="NM_001181207.3"/>
</dbReference>
<dbReference type="SMR" id="P48363"/>
<dbReference type="BioGRID" id="33320">
    <property type="interactions" value="650"/>
</dbReference>
<dbReference type="ComplexPortal" id="CPX-1671">
    <property type="entry name" value="Prefoldin co-chaperone complex"/>
</dbReference>
<dbReference type="DIP" id="DIP-6837N"/>
<dbReference type="FunCoup" id="P48363">
    <property type="interactions" value="1183"/>
</dbReference>
<dbReference type="IntAct" id="P48363">
    <property type="interactions" value="10"/>
</dbReference>
<dbReference type="MINT" id="P48363"/>
<dbReference type="STRING" id="4932.YGR078C"/>
<dbReference type="iPTMnet" id="P48363"/>
<dbReference type="PaxDb" id="4932-YGR078C"/>
<dbReference type="PeptideAtlas" id="P48363"/>
<dbReference type="EnsemblFungi" id="YGR078C_mRNA">
    <property type="protein sequence ID" value="YGR078C"/>
    <property type="gene ID" value="YGR078C"/>
</dbReference>
<dbReference type="GeneID" id="852969"/>
<dbReference type="KEGG" id="sce:YGR078C"/>
<dbReference type="AGR" id="SGD:S000003310"/>
<dbReference type="SGD" id="S000003310">
    <property type="gene designation" value="PAC10"/>
</dbReference>
<dbReference type="VEuPathDB" id="FungiDB:YGR078C"/>
<dbReference type="eggNOG" id="KOG3313">
    <property type="taxonomic scope" value="Eukaryota"/>
</dbReference>
<dbReference type="GeneTree" id="ENSGT00390000018904"/>
<dbReference type="HOGENOM" id="CLU_083737_0_0_1"/>
<dbReference type="InParanoid" id="P48363"/>
<dbReference type="OMA" id="YNWDVAQ"/>
<dbReference type="OrthoDB" id="6375174at2759"/>
<dbReference type="BioCyc" id="YEAST:G3O-30790-MONOMER"/>
<dbReference type="BioGRID-ORCS" id="852969">
    <property type="hits" value="8 hits in 10 CRISPR screens"/>
</dbReference>
<dbReference type="PRO" id="PR:P48363"/>
<dbReference type="Proteomes" id="UP000002311">
    <property type="component" value="Chromosome VII"/>
</dbReference>
<dbReference type="RNAct" id="P48363">
    <property type="molecule type" value="protein"/>
</dbReference>
<dbReference type="GO" id="GO:0005737">
    <property type="term" value="C:cytoplasm"/>
    <property type="evidence" value="ECO:0000314"/>
    <property type="project" value="SGD"/>
</dbReference>
<dbReference type="GO" id="GO:0016272">
    <property type="term" value="C:prefoldin complex"/>
    <property type="evidence" value="ECO:0000353"/>
    <property type="project" value="ComplexPortal"/>
</dbReference>
<dbReference type="GO" id="GO:0015631">
    <property type="term" value="F:tubulin binding"/>
    <property type="evidence" value="ECO:0000314"/>
    <property type="project" value="SGD"/>
</dbReference>
<dbReference type="GO" id="GO:0007017">
    <property type="term" value="P:microtubule-based process"/>
    <property type="evidence" value="ECO:0000318"/>
    <property type="project" value="GO_Central"/>
</dbReference>
<dbReference type="GO" id="GO:0006457">
    <property type="term" value="P:protein folding"/>
    <property type="evidence" value="ECO:0000303"/>
    <property type="project" value="ComplexPortal"/>
</dbReference>
<dbReference type="GO" id="GO:0007021">
    <property type="term" value="P:tubulin complex assembly"/>
    <property type="evidence" value="ECO:0000315"/>
    <property type="project" value="SGD"/>
</dbReference>
<dbReference type="CDD" id="cd23156">
    <property type="entry name" value="Prefoldin_3"/>
    <property type="match status" value="1"/>
</dbReference>
<dbReference type="FunFam" id="1.10.287.370:FF:000001">
    <property type="entry name" value="Prefoldin subunit 3"/>
    <property type="match status" value="1"/>
</dbReference>
<dbReference type="Gene3D" id="1.10.287.370">
    <property type="match status" value="1"/>
</dbReference>
<dbReference type="InterPro" id="IPR016655">
    <property type="entry name" value="PFD3"/>
</dbReference>
<dbReference type="InterPro" id="IPR009053">
    <property type="entry name" value="Prefoldin"/>
</dbReference>
<dbReference type="InterPro" id="IPR004127">
    <property type="entry name" value="Prefoldin_subunit_alpha"/>
</dbReference>
<dbReference type="PANTHER" id="PTHR12409">
    <property type="entry name" value="PREFOLDIN SUBUNIT 3"/>
    <property type="match status" value="1"/>
</dbReference>
<dbReference type="PANTHER" id="PTHR12409:SF0">
    <property type="entry name" value="PREFOLDIN SUBUNIT 3"/>
    <property type="match status" value="1"/>
</dbReference>
<dbReference type="Pfam" id="PF02996">
    <property type="entry name" value="Prefoldin"/>
    <property type="match status" value="1"/>
</dbReference>
<dbReference type="PIRSF" id="PIRSF016396">
    <property type="entry name" value="Prefoldin_subunit_3"/>
    <property type="match status" value="1"/>
</dbReference>
<dbReference type="SUPFAM" id="SSF46579">
    <property type="entry name" value="Prefoldin"/>
    <property type="match status" value="1"/>
</dbReference>
<comment type="function">
    <text>Binds specifically to cytosolic chaperonin (c-CPN) and transfers target proteins to it. Binds to nascent polypeptide chain and promotes folding in an environment in which there are many competing pathways for nonnative proteins.</text>
</comment>
<comment type="subunit">
    <text evidence="2">Heterohexamer of two PFD-alpha type and four PFD-beta type subunits.</text>
</comment>
<comment type="interaction">
    <interactant intactId="EBI-13239">
        <id>P48363</id>
    </interactant>
    <interactant intactId="EBI-13246">
        <id>P53900</id>
        <label>GIM3</label>
    </interactant>
    <organismsDiffer>false</organismsDiffer>
    <experiments>4</experiments>
</comment>
<comment type="interaction">
    <interactant intactId="EBI-13239">
        <id>P48363</id>
    </interactant>
    <interactant intactId="EBI-13253">
        <id>Q04493</id>
        <label>GIM5</label>
    </interactant>
    <organismsDiffer>false</organismsDiffer>
    <experiments>6</experiments>
</comment>
<comment type="interaction">
    <interactant intactId="EBI-13239">
        <id>P48363</id>
    </interactant>
    <interactant intactId="EBI-13260">
        <id>P52553</id>
        <label>YKE2</label>
    </interactant>
    <organismsDiffer>false</organismsDiffer>
    <experiments>6</experiments>
</comment>
<comment type="miscellaneous">
    <text evidence="1">Present with 6550 molecules/cell in log phase SD medium.</text>
</comment>
<comment type="similarity">
    <text evidence="3">Belongs to the prefoldin subunit alpha family.</text>
</comment>
<evidence type="ECO:0000269" key="1">
    <source>
    </source>
</evidence>
<evidence type="ECO:0000269" key="2">
    <source>
    </source>
</evidence>
<evidence type="ECO:0000305" key="3"/>
<evidence type="ECO:0007744" key="4">
    <source>
    </source>
</evidence>
<gene>
    <name type="primary">PAC10</name>
    <name type="synonym">GIM2</name>
    <name type="synonym">PFD3</name>
    <name type="ordered locus">YGR078C</name>
</gene>
<protein>
    <recommendedName>
        <fullName>Prefoldin subunit 3</fullName>
    </recommendedName>
    <alternativeName>
        <fullName>Genes involved in microtubule biogenesis protein 2</fullName>
    </alternativeName>
    <alternativeName>
        <fullName>Gim complex subunit 2</fullName>
        <shortName>GimC subunit 2</shortName>
    </alternativeName>
</protein>
<sequence length="199" mass="23115">MDTLFNSTEKNARGIPQAPFIENVNEIIKDPSDFELCFNKFQERLSKYKFMQESKLATIKQLKTRIPDLENTLKICQSLRNHSDEGDESDEPILLHYQLNDTLYTKAQVDIPEDRADLKVGLWLGADVMLEYPIDEAIELLKKKLADSEQSLTVSTEDVEFLRENITTMEVNCARLYNWDVQRRQDLKQAQEGTKNLKI</sequence>
<keyword id="KW-0007">Acetylation</keyword>
<keyword id="KW-0143">Chaperone</keyword>
<keyword id="KW-1185">Reference proteome</keyword>
<proteinExistence type="evidence at protein level"/>
<reference key="1">
    <citation type="submission" date="1995-06" db="EMBL/GenBank/DDBJ databases">
        <authorList>
            <person name="Geiser J.R."/>
            <person name="Hoyt M.A."/>
        </authorList>
    </citation>
    <scope>NUCLEOTIDE SEQUENCE [GENOMIC DNA]</scope>
</reference>
<reference key="2">
    <citation type="journal article" date="1997" name="Nature">
        <title>The nucleotide sequence of Saccharomyces cerevisiae chromosome VII.</title>
        <authorList>
            <person name="Tettelin H."/>
            <person name="Agostoni-Carbone M.L."/>
            <person name="Albermann K."/>
            <person name="Albers M."/>
            <person name="Arroyo J."/>
            <person name="Backes U."/>
            <person name="Barreiros T."/>
            <person name="Bertani I."/>
            <person name="Bjourson A.J."/>
            <person name="Brueckner M."/>
            <person name="Bruschi C.V."/>
            <person name="Carignani G."/>
            <person name="Castagnoli L."/>
            <person name="Cerdan E."/>
            <person name="Clemente M.L."/>
            <person name="Coblenz A."/>
            <person name="Coglievina M."/>
            <person name="Coissac E."/>
            <person name="Defoor E."/>
            <person name="Del Bino S."/>
            <person name="Delius H."/>
            <person name="Delneri D."/>
            <person name="de Wergifosse P."/>
            <person name="Dujon B."/>
            <person name="Durand P."/>
            <person name="Entian K.-D."/>
            <person name="Eraso P."/>
            <person name="Escribano V."/>
            <person name="Fabiani L."/>
            <person name="Fartmann B."/>
            <person name="Feroli F."/>
            <person name="Feuermann M."/>
            <person name="Frontali L."/>
            <person name="Garcia-Gonzalez M."/>
            <person name="Garcia-Saez M.I."/>
            <person name="Goffeau A."/>
            <person name="Guerreiro P."/>
            <person name="Hani J."/>
            <person name="Hansen M."/>
            <person name="Hebling U."/>
            <person name="Hernandez K."/>
            <person name="Heumann K."/>
            <person name="Hilger F."/>
            <person name="Hofmann B."/>
            <person name="Indge K.J."/>
            <person name="James C.M."/>
            <person name="Klima R."/>
            <person name="Koetter P."/>
            <person name="Kramer B."/>
            <person name="Kramer W."/>
            <person name="Lauquin G."/>
            <person name="Leuther H."/>
            <person name="Louis E.J."/>
            <person name="Maillier E."/>
            <person name="Marconi A."/>
            <person name="Martegani E."/>
            <person name="Mazon M.J."/>
            <person name="Mazzoni C."/>
            <person name="McReynolds A.D.K."/>
            <person name="Melchioretto P."/>
            <person name="Mewes H.-W."/>
            <person name="Minenkova O."/>
            <person name="Mueller-Auer S."/>
            <person name="Nawrocki A."/>
            <person name="Netter P."/>
            <person name="Neu R."/>
            <person name="Nombela C."/>
            <person name="Oliver S.G."/>
            <person name="Panzeri L."/>
            <person name="Paoluzi S."/>
            <person name="Plevani P."/>
            <person name="Portetelle D."/>
            <person name="Portillo F."/>
            <person name="Potier S."/>
            <person name="Purnelle B."/>
            <person name="Rieger M."/>
            <person name="Riles L."/>
            <person name="Rinaldi T."/>
            <person name="Robben J."/>
            <person name="Rodrigues-Pousada C."/>
            <person name="Rodriguez-Belmonte E."/>
            <person name="Rodriguez-Torres A.M."/>
            <person name="Rose M."/>
            <person name="Ruzzi M."/>
            <person name="Saliola M."/>
            <person name="Sanchez-Perez M."/>
            <person name="Schaefer B."/>
            <person name="Schaefer M."/>
            <person name="Scharfe M."/>
            <person name="Schmidheini T."/>
            <person name="Schreer A."/>
            <person name="Skala J."/>
            <person name="Souciet J.-L."/>
            <person name="Steensma H.Y."/>
            <person name="Talla E."/>
            <person name="Thierry A."/>
            <person name="Vandenbol M."/>
            <person name="van der Aart Q.J.M."/>
            <person name="Van Dyck L."/>
            <person name="Vanoni M."/>
            <person name="Verhasselt P."/>
            <person name="Voet M."/>
            <person name="Volckaert G."/>
            <person name="Wambutt R."/>
            <person name="Watson M.D."/>
            <person name="Weber N."/>
            <person name="Wedler E."/>
            <person name="Wedler H."/>
            <person name="Wipfli P."/>
            <person name="Wolf K."/>
            <person name="Wright L.F."/>
            <person name="Zaccaria P."/>
            <person name="Zimmermann M."/>
            <person name="Zollner A."/>
            <person name="Kleine K."/>
        </authorList>
    </citation>
    <scope>NUCLEOTIDE SEQUENCE [LARGE SCALE GENOMIC DNA]</scope>
    <source>
        <strain>ATCC 204508 / S288c</strain>
    </source>
</reference>
<reference key="3">
    <citation type="journal article" date="2014" name="G3 (Bethesda)">
        <title>The reference genome sequence of Saccharomyces cerevisiae: Then and now.</title>
        <authorList>
            <person name="Engel S.R."/>
            <person name="Dietrich F.S."/>
            <person name="Fisk D.G."/>
            <person name="Binkley G."/>
            <person name="Balakrishnan R."/>
            <person name="Costanzo M.C."/>
            <person name="Dwight S.S."/>
            <person name="Hitz B.C."/>
            <person name="Karra K."/>
            <person name="Nash R.S."/>
            <person name="Weng S."/>
            <person name="Wong E.D."/>
            <person name="Lloyd P."/>
            <person name="Skrzypek M.S."/>
            <person name="Miyasato S.R."/>
            <person name="Simison M."/>
            <person name="Cherry J.M."/>
        </authorList>
    </citation>
    <scope>GENOME REANNOTATION</scope>
    <source>
        <strain>ATCC 204508 / S288c</strain>
    </source>
</reference>
<reference key="4">
    <citation type="journal article" date="2007" name="Genome Res.">
        <title>Approaching a complete repository of sequence-verified protein-encoding clones for Saccharomyces cerevisiae.</title>
        <authorList>
            <person name="Hu Y."/>
            <person name="Rolfs A."/>
            <person name="Bhullar B."/>
            <person name="Murthy T.V.S."/>
            <person name="Zhu C."/>
            <person name="Berger M.F."/>
            <person name="Camargo A.A."/>
            <person name="Kelley F."/>
            <person name="McCarron S."/>
            <person name="Jepson D."/>
            <person name="Richardson A."/>
            <person name="Raphael J."/>
            <person name="Moreira D."/>
            <person name="Taycher E."/>
            <person name="Zuo D."/>
            <person name="Mohr S."/>
            <person name="Kane M.F."/>
            <person name="Williamson J."/>
            <person name="Simpson A.J.G."/>
            <person name="Bulyk M.L."/>
            <person name="Harlow E."/>
            <person name="Marsischky G."/>
            <person name="Kolodner R.D."/>
            <person name="LaBaer J."/>
        </authorList>
    </citation>
    <scope>NUCLEOTIDE SEQUENCE [GENOMIC DNA]</scope>
    <source>
        <strain>ATCC 204508 / S288c</strain>
    </source>
</reference>
<reference key="5">
    <citation type="journal article" date="1998" name="EMBO J.">
        <title>A novel protein complex promoting formation of functional alpha- and gamma-tubulin.</title>
        <authorList>
            <person name="Geissler S."/>
            <person name="Siegers K."/>
            <person name="Schiebel E."/>
        </authorList>
    </citation>
    <scope>CHARACTERIZATION</scope>
</reference>
<reference key="6">
    <citation type="journal article" date="1999" name="EMBO J.">
        <title>Compartmentation of protein folding in vivo: sequestration of non-native polypeptide by the chaperonin-GimC system.</title>
        <authorList>
            <person name="Siegers K."/>
            <person name="Waldmann T."/>
            <person name="Leroux M.R."/>
            <person name="Grein K."/>
            <person name="Shevchenko A."/>
            <person name="Schiebel E."/>
            <person name="Hartl F.U."/>
        </authorList>
    </citation>
    <scope>IDENTIFICATION IN THE PREFOLDIN COMPLEX</scope>
</reference>
<reference key="7">
    <citation type="journal article" date="2003" name="Nature">
        <title>Global analysis of protein expression in yeast.</title>
        <authorList>
            <person name="Ghaemmaghami S."/>
            <person name="Huh W.-K."/>
            <person name="Bower K."/>
            <person name="Howson R.W."/>
            <person name="Belle A."/>
            <person name="Dephoure N."/>
            <person name="O'Shea E.K."/>
            <person name="Weissman J.S."/>
        </authorList>
    </citation>
    <scope>LEVEL OF PROTEIN EXPRESSION [LARGE SCALE ANALYSIS]</scope>
</reference>
<reference key="8">
    <citation type="journal article" date="2012" name="Proc. Natl. Acad. Sci. U.S.A.">
        <title>N-terminal acetylome analyses and functional insights of the N-terminal acetyltransferase NatB.</title>
        <authorList>
            <person name="Van Damme P."/>
            <person name="Lasa M."/>
            <person name="Polevoda B."/>
            <person name="Gazquez C."/>
            <person name="Elosegui-Artola A."/>
            <person name="Kim D.S."/>
            <person name="De Juan-Pardo E."/>
            <person name="Demeyer K."/>
            <person name="Hole K."/>
            <person name="Larrea E."/>
            <person name="Timmerman E."/>
            <person name="Prieto J."/>
            <person name="Arnesen T."/>
            <person name="Sherman F."/>
            <person name="Gevaert K."/>
            <person name="Aldabe R."/>
        </authorList>
    </citation>
    <scope>ACETYLATION [LARGE SCALE ANALYSIS] AT MET-1</scope>
    <scope>IDENTIFICATION BY MASS SPECTROMETRY [LARGE SCALE ANALYSIS]</scope>
</reference>
<name>PFD3_YEAST</name>
<feature type="chain" id="PRO_0000153659" description="Prefoldin subunit 3">
    <location>
        <begin position="1"/>
        <end position="199"/>
    </location>
</feature>
<feature type="modified residue" description="N-acetylmethionine" evidence="4">
    <location>
        <position position="1"/>
    </location>
</feature>